<sequence>MTRRDTTRVIRPATGPERTCKSWLTEAALRMLMNNLHPDVAERPEELVVYGGIGRAARDWESYDKIVETLRRLEDDETLLVQSGKPVGVFRTHADAPRVLIANSNLVPRWASWEHFNELDRKGLAMYGQMTAGSWIYIGAQGIVQGTYETFVEMGRQHYGGDLSGRWLLTAGLGGMGGAQPLAAVMAGAACLAIECQPSSIEMRLRTGYLDRSTDKVEEALAWIEESCAAKTPISVGLLGNAAELLPELFKRGVRPDLLTDQTSAHDPVNGYLPAGWSLERWHAMRDQDPPQVAEAAKASMAAHVKAMLDFQAAGVPTVDYGNNIRQMALEEGVTNAFDFPGFVPAYIRPLFCRGVGPFRWAALSGDPEDIAKTDAKVKELIPDNPHLHNWLDMAGQKIRFQGLPARICWVGLGDRHRLGLAFNEMVAKGELKAPIVIGRDHLDSGSVASPNRETEAMRDGSDAVSDWPLLNALLNTASGATWVSLHHGGGVGMGFSQHAGMVIVCDGTEAAAKRVARVLWNDPATGVMRHADAGYDIALACAREKGLDLPGIL</sequence>
<reference key="1">
    <citation type="journal article" date="2010" name="J. Bacteriol.">
        <title>The genetic basis of laboratory adaptation in Caulobacter crescentus.</title>
        <authorList>
            <person name="Marks M.E."/>
            <person name="Castro-Rojas C.M."/>
            <person name="Teiling C."/>
            <person name="Du L."/>
            <person name="Kapatral V."/>
            <person name="Walunas T.L."/>
            <person name="Crosson S."/>
        </authorList>
    </citation>
    <scope>NUCLEOTIDE SEQUENCE [LARGE SCALE GENOMIC DNA]</scope>
    <source>
        <strain>NA1000 / CB15N</strain>
    </source>
</reference>
<evidence type="ECO:0000255" key="1">
    <source>
        <dbReference type="HAMAP-Rule" id="MF_00577"/>
    </source>
</evidence>
<name>HUTU_CAUVN</name>
<comment type="function">
    <text evidence="1">Catalyzes the conversion of urocanate to 4-imidazolone-5-propionate.</text>
</comment>
<comment type="catalytic activity">
    <reaction evidence="1">
        <text>4-imidazolone-5-propanoate = trans-urocanate + H2O</text>
        <dbReference type="Rhea" id="RHEA:13101"/>
        <dbReference type="ChEBI" id="CHEBI:15377"/>
        <dbReference type="ChEBI" id="CHEBI:17771"/>
        <dbReference type="ChEBI" id="CHEBI:77893"/>
        <dbReference type="EC" id="4.2.1.49"/>
    </reaction>
</comment>
<comment type="cofactor">
    <cofactor evidence="1">
        <name>NAD(+)</name>
        <dbReference type="ChEBI" id="CHEBI:57540"/>
    </cofactor>
    <text evidence="1">Binds 1 NAD(+) per subunit.</text>
</comment>
<comment type="pathway">
    <text evidence="1">Amino-acid degradation; L-histidine degradation into L-glutamate; N-formimidoyl-L-glutamate from L-histidine: step 2/3.</text>
</comment>
<comment type="subcellular location">
    <subcellularLocation>
        <location evidence="1">Cytoplasm</location>
    </subcellularLocation>
</comment>
<comment type="similarity">
    <text evidence="1">Belongs to the urocanase family.</text>
</comment>
<gene>
    <name evidence="1" type="primary">hutU</name>
    <name type="ordered locus">CCNA_01008</name>
</gene>
<feature type="chain" id="PRO_1000199899" description="Urocanate hydratase">
    <location>
        <begin position="1"/>
        <end position="554"/>
    </location>
</feature>
<feature type="active site" evidence="1">
    <location>
        <position position="409"/>
    </location>
</feature>
<feature type="binding site" evidence="1">
    <location>
        <begin position="51"/>
        <end position="52"/>
    </location>
    <ligand>
        <name>NAD(+)</name>
        <dbReference type="ChEBI" id="CHEBI:57540"/>
    </ligand>
</feature>
<feature type="binding site" evidence="1">
    <location>
        <position position="129"/>
    </location>
    <ligand>
        <name>NAD(+)</name>
        <dbReference type="ChEBI" id="CHEBI:57540"/>
    </ligand>
</feature>
<feature type="binding site" evidence="1">
    <location>
        <begin position="175"/>
        <end position="177"/>
    </location>
    <ligand>
        <name>NAD(+)</name>
        <dbReference type="ChEBI" id="CHEBI:57540"/>
    </ligand>
</feature>
<feature type="binding site" evidence="1">
    <location>
        <position position="195"/>
    </location>
    <ligand>
        <name>NAD(+)</name>
        <dbReference type="ChEBI" id="CHEBI:57540"/>
    </ligand>
</feature>
<feature type="binding site" evidence="1">
    <location>
        <begin position="241"/>
        <end position="242"/>
    </location>
    <ligand>
        <name>NAD(+)</name>
        <dbReference type="ChEBI" id="CHEBI:57540"/>
    </ligand>
</feature>
<feature type="binding site" evidence="1">
    <location>
        <begin position="262"/>
        <end position="266"/>
    </location>
    <ligand>
        <name>NAD(+)</name>
        <dbReference type="ChEBI" id="CHEBI:57540"/>
    </ligand>
</feature>
<feature type="binding site" evidence="1">
    <location>
        <begin position="272"/>
        <end position="273"/>
    </location>
    <ligand>
        <name>NAD(+)</name>
        <dbReference type="ChEBI" id="CHEBI:57540"/>
    </ligand>
</feature>
<feature type="binding site" evidence="1">
    <location>
        <position position="321"/>
    </location>
    <ligand>
        <name>NAD(+)</name>
        <dbReference type="ChEBI" id="CHEBI:57540"/>
    </ligand>
</feature>
<feature type="binding site" evidence="1">
    <location>
        <position position="491"/>
    </location>
    <ligand>
        <name>NAD(+)</name>
        <dbReference type="ChEBI" id="CHEBI:57540"/>
    </ligand>
</feature>
<dbReference type="EC" id="4.2.1.49" evidence="1"/>
<dbReference type="EMBL" id="CP001340">
    <property type="protein sequence ID" value="ACL94473.1"/>
    <property type="molecule type" value="Genomic_DNA"/>
</dbReference>
<dbReference type="RefSeq" id="WP_010918841.1">
    <property type="nucleotide sequence ID" value="NC_011916.1"/>
</dbReference>
<dbReference type="RefSeq" id="YP_002516381.1">
    <property type="nucleotide sequence ID" value="NC_011916.1"/>
</dbReference>
<dbReference type="SMR" id="B8H2R9"/>
<dbReference type="GeneID" id="7333140"/>
<dbReference type="KEGG" id="ccs:CCNA_01008"/>
<dbReference type="PATRIC" id="fig|565050.3.peg.989"/>
<dbReference type="HOGENOM" id="CLU_018868_0_1_5"/>
<dbReference type="OrthoDB" id="9764874at2"/>
<dbReference type="PhylomeDB" id="B8H2R9"/>
<dbReference type="UniPathway" id="UPA00379">
    <property type="reaction ID" value="UER00550"/>
</dbReference>
<dbReference type="Proteomes" id="UP000001364">
    <property type="component" value="Chromosome"/>
</dbReference>
<dbReference type="GO" id="GO:0005737">
    <property type="term" value="C:cytoplasm"/>
    <property type="evidence" value="ECO:0007669"/>
    <property type="project" value="UniProtKB-SubCell"/>
</dbReference>
<dbReference type="GO" id="GO:0016153">
    <property type="term" value="F:urocanate hydratase activity"/>
    <property type="evidence" value="ECO:0007669"/>
    <property type="project" value="UniProtKB-UniRule"/>
</dbReference>
<dbReference type="GO" id="GO:0019556">
    <property type="term" value="P:L-histidine catabolic process to glutamate and formamide"/>
    <property type="evidence" value="ECO:0007669"/>
    <property type="project" value="UniProtKB-UniPathway"/>
</dbReference>
<dbReference type="GO" id="GO:0019557">
    <property type="term" value="P:L-histidine catabolic process to glutamate and formate"/>
    <property type="evidence" value="ECO:0007669"/>
    <property type="project" value="UniProtKB-UniPathway"/>
</dbReference>
<dbReference type="FunFam" id="3.40.50.10730:FF:000001">
    <property type="entry name" value="Urocanate hydratase"/>
    <property type="match status" value="1"/>
</dbReference>
<dbReference type="Gene3D" id="3.40.50.10730">
    <property type="entry name" value="Urocanase like domains"/>
    <property type="match status" value="1"/>
</dbReference>
<dbReference type="Gene3D" id="3.40.1770.10">
    <property type="entry name" value="Urocanase superfamily"/>
    <property type="match status" value="1"/>
</dbReference>
<dbReference type="HAMAP" id="MF_00577">
    <property type="entry name" value="HutU"/>
    <property type="match status" value="1"/>
</dbReference>
<dbReference type="InterPro" id="IPR055351">
    <property type="entry name" value="Urocanase"/>
</dbReference>
<dbReference type="InterPro" id="IPR023637">
    <property type="entry name" value="Urocanase-like"/>
</dbReference>
<dbReference type="InterPro" id="IPR035401">
    <property type="entry name" value="Urocanase_C"/>
</dbReference>
<dbReference type="InterPro" id="IPR038364">
    <property type="entry name" value="Urocanase_central_sf"/>
</dbReference>
<dbReference type="InterPro" id="IPR023636">
    <property type="entry name" value="Urocanase_CS"/>
</dbReference>
<dbReference type="InterPro" id="IPR035400">
    <property type="entry name" value="Urocanase_N"/>
</dbReference>
<dbReference type="InterPro" id="IPR035085">
    <property type="entry name" value="Urocanase_Rossmann-like"/>
</dbReference>
<dbReference type="InterPro" id="IPR036190">
    <property type="entry name" value="Urocanase_sf"/>
</dbReference>
<dbReference type="NCBIfam" id="TIGR01228">
    <property type="entry name" value="hutU"/>
    <property type="match status" value="1"/>
</dbReference>
<dbReference type="NCBIfam" id="NF003820">
    <property type="entry name" value="PRK05414.1"/>
    <property type="match status" value="1"/>
</dbReference>
<dbReference type="PANTHER" id="PTHR12216">
    <property type="entry name" value="UROCANATE HYDRATASE"/>
    <property type="match status" value="1"/>
</dbReference>
<dbReference type="PANTHER" id="PTHR12216:SF4">
    <property type="entry name" value="UROCANATE HYDRATASE"/>
    <property type="match status" value="1"/>
</dbReference>
<dbReference type="Pfam" id="PF01175">
    <property type="entry name" value="Urocanase"/>
    <property type="match status" value="1"/>
</dbReference>
<dbReference type="Pfam" id="PF17392">
    <property type="entry name" value="Urocanase_C"/>
    <property type="match status" value="1"/>
</dbReference>
<dbReference type="Pfam" id="PF17391">
    <property type="entry name" value="Urocanase_N"/>
    <property type="match status" value="1"/>
</dbReference>
<dbReference type="PIRSF" id="PIRSF001423">
    <property type="entry name" value="Urocanate_hydrat"/>
    <property type="match status" value="1"/>
</dbReference>
<dbReference type="SUPFAM" id="SSF111326">
    <property type="entry name" value="Urocanase"/>
    <property type="match status" value="1"/>
</dbReference>
<dbReference type="PROSITE" id="PS01233">
    <property type="entry name" value="UROCANASE"/>
    <property type="match status" value="1"/>
</dbReference>
<organism>
    <name type="scientific">Caulobacter vibrioides (strain NA1000 / CB15N)</name>
    <name type="common">Caulobacter crescentus</name>
    <dbReference type="NCBI Taxonomy" id="565050"/>
    <lineage>
        <taxon>Bacteria</taxon>
        <taxon>Pseudomonadati</taxon>
        <taxon>Pseudomonadota</taxon>
        <taxon>Alphaproteobacteria</taxon>
        <taxon>Caulobacterales</taxon>
        <taxon>Caulobacteraceae</taxon>
        <taxon>Caulobacter</taxon>
    </lineage>
</organism>
<proteinExistence type="inferred from homology"/>
<protein>
    <recommendedName>
        <fullName evidence="1">Urocanate hydratase</fullName>
        <shortName evidence="1">Urocanase</shortName>
        <ecNumber evidence="1">4.2.1.49</ecNumber>
    </recommendedName>
    <alternativeName>
        <fullName evidence="1">Imidazolonepropionate hydrolase</fullName>
    </alternativeName>
</protein>
<keyword id="KW-0963">Cytoplasm</keyword>
<keyword id="KW-0369">Histidine metabolism</keyword>
<keyword id="KW-0456">Lyase</keyword>
<keyword id="KW-0520">NAD</keyword>
<keyword id="KW-1185">Reference proteome</keyword>
<accession>B8H2R9</accession>